<evidence type="ECO:0000250" key="1"/>
<evidence type="ECO:0000269" key="2">
    <source>
    </source>
</evidence>
<evidence type="ECO:0000269" key="3">
    <source>
    </source>
</evidence>
<evidence type="ECO:0000269" key="4">
    <source>
    </source>
</evidence>
<evidence type="ECO:0000305" key="5"/>
<protein>
    <recommendedName>
        <fullName>Basic phospholipase A2 CbII</fullName>
        <shortName>svPLA2</shortName>
        <ecNumber>3.1.1.4</ecNumber>
    </recommendedName>
    <alternativeName>
        <fullName>Phosphatidylcholine 2-acylhydrolase</fullName>
    </alternativeName>
</protein>
<reference key="1">
    <citation type="journal article" date="1995" name="Toxicon">
        <title>Amino acid sequences of a heterodimeric neurotoxin from the venom of the false horned viper (Pseudocerastes fieldi).</title>
        <authorList>
            <person name="Francis B."/>
            <person name="Bdolah A."/>
            <person name="Kaiser I.I."/>
        </authorList>
    </citation>
    <scope>PROTEIN SEQUENCE</scope>
    <scope>CATALYTIC ACTIVITY</scope>
    <source>
        <tissue>Venom</tissue>
    </source>
</reference>
<reference key="2">
    <citation type="journal article" date="1985" name="Biochem. Int.">
        <title>The neurotoxic complex from the venom of Pseudocerastes fieldi. Contribution of the nontoxic subunit.</title>
        <authorList>
            <person name="Bdolah A."/>
            <person name="Kinamon S."/>
            <person name="Batzri-Izraeli R."/>
        </authorList>
    </citation>
    <scope>SUBUNIT</scope>
</reference>
<reference key="3">
    <citation type="journal article" date="2007" name="BMC Struct. Biol.">
        <title>Characterization of a human coagulation factor Xa-binding site on Viperidae snake venom phospholipases A2 by affinity binding studies and molecular bioinformatics.</title>
        <authorList>
            <person name="Faure G."/>
            <person name="Gowda V.T."/>
            <person name="Maroun R.C."/>
        </authorList>
    </citation>
    <scope>FUNCTION AS AN ANTICOAGULANT</scope>
    <scope>3D-STRUCTURE MODELING</scope>
</reference>
<organism>
    <name type="scientific">Pseudocerastes fieldi</name>
    <name type="common">Field's horned viper</name>
    <name type="synonym">Pseudocerastes persicus fieldi</name>
    <dbReference type="NCBI Taxonomy" id="1355908"/>
    <lineage>
        <taxon>Eukaryota</taxon>
        <taxon>Metazoa</taxon>
        <taxon>Chordata</taxon>
        <taxon>Craniata</taxon>
        <taxon>Vertebrata</taxon>
        <taxon>Euteleostomi</taxon>
        <taxon>Lepidosauria</taxon>
        <taxon>Squamata</taxon>
        <taxon>Bifurcata</taxon>
        <taxon>Unidentata</taxon>
        <taxon>Episquamata</taxon>
        <taxon>Toxicofera</taxon>
        <taxon>Serpentes</taxon>
        <taxon>Colubroidea</taxon>
        <taxon>Viperidae</taxon>
        <taxon>Viperinae</taxon>
        <taxon>Pseudocerastes</taxon>
    </lineage>
</organism>
<name>PA2B2_PSEFE</name>
<dbReference type="EC" id="3.1.1.4"/>
<dbReference type="SMR" id="P0DKR5"/>
<dbReference type="GO" id="GO:0005576">
    <property type="term" value="C:extracellular region"/>
    <property type="evidence" value="ECO:0007669"/>
    <property type="project" value="UniProtKB-SubCell"/>
</dbReference>
<dbReference type="GO" id="GO:0005509">
    <property type="term" value="F:calcium ion binding"/>
    <property type="evidence" value="ECO:0007669"/>
    <property type="project" value="InterPro"/>
</dbReference>
<dbReference type="GO" id="GO:0047498">
    <property type="term" value="F:calcium-dependent phospholipase A2 activity"/>
    <property type="evidence" value="ECO:0007669"/>
    <property type="project" value="TreeGrafter"/>
</dbReference>
<dbReference type="GO" id="GO:0005543">
    <property type="term" value="F:phospholipid binding"/>
    <property type="evidence" value="ECO:0007669"/>
    <property type="project" value="TreeGrafter"/>
</dbReference>
<dbReference type="GO" id="GO:0090729">
    <property type="term" value="F:toxin activity"/>
    <property type="evidence" value="ECO:0007669"/>
    <property type="project" value="UniProtKB-KW"/>
</dbReference>
<dbReference type="GO" id="GO:0050482">
    <property type="term" value="P:arachidonate secretion"/>
    <property type="evidence" value="ECO:0007669"/>
    <property type="project" value="InterPro"/>
</dbReference>
<dbReference type="GO" id="GO:0016042">
    <property type="term" value="P:lipid catabolic process"/>
    <property type="evidence" value="ECO:0007669"/>
    <property type="project" value="UniProtKB-KW"/>
</dbReference>
<dbReference type="GO" id="GO:0042130">
    <property type="term" value="P:negative regulation of T cell proliferation"/>
    <property type="evidence" value="ECO:0007669"/>
    <property type="project" value="TreeGrafter"/>
</dbReference>
<dbReference type="GO" id="GO:0006644">
    <property type="term" value="P:phospholipid metabolic process"/>
    <property type="evidence" value="ECO:0007669"/>
    <property type="project" value="InterPro"/>
</dbReference>
<dbReference type="CDD" id="cd00125">
    <property type="entry name" value="PLA2c"/>
    <property type="match status" value="1"/>
</dbReference>
<dbReference type="FunFam" id="1.20.90.10:FF:000001">
    <property type="entry name" value="Basic phospholipase A2 homolog"/>
    <property type="match status" value="1"/>
</dbReference>
<dbReference type="Gene3D" id="1.20.90.10">
    <property type="entry name" value="Phospholipase A2 domain"/>
    <property type="match status" value="1"/>
</dbReference>
<dbReference type="InterPro" id="IPR001211">
    <property type="entry name" value="PLipase_A2"/>
</dbReference>
<dbReference type="InterPro" id="IPR033112">
    <property type="entry name" value="PLipase_A2_Asp_AS"/>
</dbReference>
<dbReference type="InterPro" id="IPR016090">
    <property type="entry name" value="PLipase_A2_dom"/>
</dbReference>
<dbReference type="InterPro" id="IPR036444">
    <property type="entry name" value="PLipase_A2_dom_sf"/>
</dbReference>
<dbReference type="InterPro" id="IPR033113">
    <property type="entry name" value="PLipase_A2_His_AS"/>
</dbReference>
<dbReference type="PANTHER" id="PTHR11716">
    <property type="entry name" value="PHOSPHOLIPASE A2 FAMILY MEMBER"/>
    <property type="match status" value="1"/>
</dbReference>
<dbReference type="PANTHER" id="PTHR11716:SF9">
    <property type="entry name" value="PHOSPHOLIPASE A2, MEMBRANE ASSOCIATED"/>
    <property type="match status" value="1"/>
</dbReference>
<dbReference type="Pfam" id="PF00068">
    <property type="entry name" value="Phospholip_A2_1"/>
    <property type="match status" value="1"/>
</dbReference>
<dbReference type="PRINTS" id="PR00389">
    <property type="entry name" value="PHPHLIPASEA2"/>
</dbReference>
<dbReference type="SMART" id="SM00085">
    <property type="entry name" value="PA2c"/>
    <property type="match status" value="1"/>
</dbReference>
<dbReference type="SUPFAM" id="SSF48619">
    <property type="entry name" value="Phospholipase A2, PLA2"/>
    <property type="match status" value="1"/>
</dbReference>
<dbReference type="PROSITE" id="PS00119">
    <property type="entry name" value="PA2_ASP"/>
    <property type="match status" value="1"/>
</dbReference>
<dbReference type="PROSITE" id="PS00118">
    <property type="entry name" value="PA2_HIS"/>
    <property type="match status" value="1"/>
</dbReference>
<sequence>NLFQFTKMINGKLGAFAVLNYISTGCYCGWGGQGTPKDATDRCCFVHDCCYGRVKGCNPKLAIYSYSFQKGNIVCGKNNGCLRDICECDRVAANCFHQNKNTYNRNYRFLSSSRCRQTSEQC</sequence>
<keyword id="KW-1203">Blood coagulation cascade inhibiting toxin</keyword>
<keyword id="KW-0106">Calcium</keyword>
<keyword id="KW-0903">Direct protein sequencing</keyword>
<keyword id="KW-1015">Disulfide bond</keyword>
<keyword id="KW-1199">Hemostasis impairing toxin</keyword>
<keyword id="KW-0378">Hydrolase</keyword>
<keyword id="KW-0442">Lipid degradation</keyword>
<keyword id="KW-0443">Lipid metabolism</keyword>
<keyword id="KW-0479">Metal-binding</keyword>
<keyword id="KW-0528">Neurotoxin</keyword>
<keyword id="KW-0638">Presynaptic neurotoxin</keyword>
<keyword id="KW-0964">Secreted</keyword>
<keyword id="KW-0800">Toxin</keyword>
<comment type="function">
    <text evidence="2">Heterodimer: presynaptic neurotoxin.</text>
</comment>
<comment type="function">
    <text evidence="2">Monomer: Snake venom phospholipase A2 (PLA2) that exhibits strong anticoagulant effects by binding to factor Xa (F10) and inhibiting the prothrombinase activity (IC(50) is 20 nM). PLA2 catalyzes the calcium-dependent hydrolysis of the 2-acyl groups in 3-sn-phosphoglycerides.</text>
</comment>
<comment type="catalytic activity">
    <reaction evidence="4">
        <text>a 1,2-diacyl-sn-glycero-3-phosphocholine + H2O = a 1-acyl-sn-glycero-3-phosphocholine + a fatty acid + H(+)</text>
        <dbReference type="Rhea" id="RHEA:15801"/>
        <dbReference type="ChEBI" id="CHEBI:15377"/>
        <dbReference type="ChEBI" id="CHEBI:15378"/>
        <dbReference type="ChEBI" id="CHEBI:28868"/>
        <dbReference type="ChEBI" id="CHEBI:57643"/>
        <dbReference type="ChEBI" id="CHEBI:58168"/>
        <dbReference type="EC" id="3.1.1.4"/>
    </reaction>
</comment>
<comment type="cofactor">
    <cofactor evidence="1">
        <name>Ca(2+)</name>
        <dbReference type="ChEBI" id="CHEBI:29108"/>
    </cofactor>
    <text evidence="1">Binds 1 Ca(2+) ion.</text>
</comment>
<comment type="subunit">
    <text evidence="3">Heterodimer of an acidic subunit (CbIalpha or CbIbeta) and a basic subunit (CbII). The acidic subunit is non-toxic, and increases the toxicity of the basic subunit.</text>
</comment>
<comment type="subcellular location">
    <subcellularLocation>
        <location>Secreted</location>
    </subcellularLocation>
</comment>
<comment type="tissue specificity">
    <text>Expressed by the venom gland.</text>
</comment>
<comment type="similarity">
    <text evidence="5">Belongs to the phospholipase A2 family. Group I subfamily. D49 sub-subfamily.</text>
</comment>
<feature type="chain" id="PRO_0000420359" description="Basic phospholipase A2 CbII">
    <location>
        <begin position="1"/>
        <end position="122"/>
    </location>
</feature>
<feature type="active site" evidence="1">
    <location>
        <position position="47"/>
    </location>
</feature>
<feature type="active site" evidence="1">
    <location>
        <position position="89"/>
    </location>
</feature>
<feature type="binding site" evidence="1">
    <location>
        <position position="27"/>
    </location>
    <ligand>
        <name>Ca(2+)</name>
        <dbReference type="ChEBI" id="CHEBI:29108"/>
    </ligand>
</feature>
<feature type="binding site" evidence="1">
    <location>
        <position position="29"/>
    </location>
    <ligand>
        <name>Ca(2+)</name>
        <dbReference type="ChEBI" id="CHEBI:29108"/>
    </ligand>
</feature>
<feature type="binding site" evidence="1">
    <location>
        <position position="31"/>
    </location>
    <ligand>
        <name>Ca(2+)</name>
        <dbReference type="ChEBI" id="CHEBI:29108"/>
    </ligand>
</feature>
<feature type="binding site" evidence="1">
    <location>
        <position position="48"/>
    </location>
    <ligand>
        <name>Ca(2+)</name>
        <dbReference type="ChEBI" id="CHEBI:29108"/>
    </ligand>
</feature>
<feature type="disulfide bond" evidence="1">
    <location>
        <begin position="26"/>
        <end position="115"/>
    </location>
</feature>
<feature type="disulfide bond" evidence="1">
    <location>
        <begin position="28"/>
        <end position="44"/>
    </location>
</feature>
<feature type="disulfide bond" evidence="1">
    <location>
        <begin position="43"/>
        <end position="95"/>
    </location>
</feature>
<feature type="disulfide bond" evidence="1">
    <location>
        <begin position="49"/>
        <end position="122"/>
    </location>
</feature>
<feature type="disulfide bond" evidence="1">
    <location>
        <begin position="50"/>
        <end position="88"/>
    </location>
</feature>
<feature type="disulfide bond" evidence="1">
    <location>
        <begin position="57"/>
        <end position="81"/>
    </location>
</feature>
<feature type="disulfide bond" evidence="1">
    <location>
        <begin position="75"/>
        <end position="86"/>
    </location>
</feature>
<proteinExistence type="evidence at protein level"/>
<accession>P0DKR5</accession>